<keyword id="KW-0342">GTP-binding</keyword>
<keyword id="KW-0378">Hydrolase</keyword>
<keyword id="KW-0479">Metal-binding</keyword>
<keyword id="KW-0547">Nucleotide-binding</keyword>
<keyword id="KW-0554">One-carbon metabolism</keyword>
<keyword id="KW-1185">Reference proteome</keyword>
<keyword id="KW-0862">Zinc</keyword>
<reference key="1">
    <citation type="journal article" date="2008" name="Environ. Microbiol.">
        <title>The genome of Erwinia tasmaniensis strain Et1/99, a non-pathogenic bacterium in the genus Erwinia.</title>
        <authorList>
            <person name="Kube M."/>
            <person name="Migdoll A.M."/>
            <person name="Mueller I."/>
            <person name="Kuhl H."/>
            <person name="Beck A."/>
            <person name="Reinhardt R."/>
            <person name="Geider K."/>
        </authorList>
    </citation>
    <scope>NUCLEOTIDE SEQUENCE [LARGE SCALE GENOMIC DNA]</scope>
    <source>
        <strain>DSM 17950 / CFBP 7177 / CIP 109463 / NCPPB 4357 / Et1/99</strain>
    </source>
</reference>
<gene>
    <name evidence="1" type="primary">folE</name>
    <name type="ordered locus">ETA_12880</name>
</gene>
<sequence>MATLSQEATLVHQALVARGLETPLRSPVREMDDDARKQLIAGHMTEIMQLLNLDLEDDSLAETPQRIAKMYVNEVFSGLDYANFPKITVIENKMKVDEMVTVRDITLTSTCEHHFVIIDGQATVAYIPKDKVIGLSKINRIVQFFSSRPQVQERLTQQILVALQTLLGTSNVAVSIDAVHYCVKARGIRDATSATTTTSLGGLFKSSQNTRQEFLRSVRHR</sequence>
<dbReference type="EC" id="3.5.4.16" evidence="1"/>
<dbReference type="EMBL" id="CU468135">
    <property type="protein sequence ID" value="CAO96334.1"/>
    <property type="molecule type" value="Genomic_DNA"/>
</dbReference>
<dbReference type="RefSeq" id="WP_012441028.1">
    <property type="nucleotide sequence ID" value="NC_010694.1"/>
</dbReference>
<dbReference type="SMR" id="B2VII2"/>
<dbReference type="STRING" id="465817.ETA_12880"/>
<dbReference type="KEGG" id="eta:ETA_12880"/>
<dbReference type="eggNOG" id="COG0302">
    <property type="taxonomic scope" value="Bacteria"/>
</dbReference>
<dbReference type="HOGENOM" id="CLU_049768_3_2_6"/>
<dbReference type="OrthoDB" id="9801207at2"/>
<dbReference type="UniPathway" id="UPA00848">
    <property type="reaction ID" value="UER00151"/>
</dbReference>
<dbReference type="Proteomes" id="UP000001726">
    <property type="component" value="Chromosome"/>
</dbReference>
<dbReference type="GO" id="GO:0005737">
    <property type="term" value="C:cytoplasm"/>
    <property type="evidence" value="ECO:0007669"/>
    <property type="project" value="TreeGrafter"/>
</dbReference>
<dbReference type="GO" id="GO:0005525">
    <property type="term" value="F:GTP binding"/>
    <property type="evidence" value="ECO:0007669"/>
    <property type="project" value="UniProtKB-KW"/>
</dbReference>
<dbReference type="GO" id="GO:0003934">
    <property type="term" value="F:GTP cyclohydrolase I activity"/>
    <property type="evidence" value="ECO:0007669"/>
    <property type="project" value="UniProtKB-UniRule"/>
</dbReference>
<dbReference type="GO" id="GO:0008270">
    <property type="term" value="F:zinc ion binding"/>
    <property type="evidence" value="ECO:0007669"/>
    <property type="project" value="UniProtKB-UniRule"/>
</dbReference>
<dbReference type="GO" id="GO:0006730">
    <property type="term" value="P:one-carbon metabolic process"/>
    <property type="evidence" value="ECO:0007669"/>
    <property type="project" value="UniProtKB-UniRule"/>
</dbReference>
<dbReference type="GO" id="GO:0006729">
    <property type="term" value="P:tetrahydrobiopterin biosynthetic process"/>
    <property type="evidence" value="ECO:0007669"/>
    <property type="project" value="TreeGrafter"/>
</dbReference>
<dbReference type="GO" id="GO:0046654">
    <property type="term" value="P:tetrahydrofolate biosynthetic process"/>
    <property type="evidence" value="ECO:0007669"/>
    <property type="project" value="UniProtKB-UniRule"/>
</dbReference>
<dbReference type="FunFam" id="1.10.286.10:FF:000002">
    <property type="entry name" value="GTP cyclohydrolase 1"/>
    <property type="match status" value="1"/>
</dbReference>
<dbReference type="FunFam" id="3.30.1130.10:FF:000001">
    <property type="entry name" value="GTP cyclohydrolase 1"/>
    <property type="match status" value="1"/>
</dbReference>
<dbReference type="Gene3D" id="1.10.286.10">
    <property type="match status" value="1"/>
</dbReference>
<dbReference type="Gene3D" id="3.30.1130.10">
    <property type="match status" value="1"/>
</dbReference>
<dbReference type="HAMAP" id="MF_00223">
    <property type="entry name" value="FolE"/>
    <property type="match status" value="1"/>
</dbReference>
<dbReference type="InterPro" id="IPR043133">
    <property type="entry name" value="GTP-CH-I_C/QueF"/>
</dbReference>
<dbReference type="InterPro" id="IPR043134">
    <property type="entry name" value="GTP-CH-I_N"/>
</dbReference>
<dbReference type="InterPro" id="IPR001474">
    <property type="entry name" value="GTP_CycHdrlase_I"/>
</dbReference>
<dbReference type="InterPro" id="IPR018234">
    <property type="entry name" value="GTP_CycHdrlase_I_CS"/>
</dbReference>
<dbReference type="InterPro" id="IPR020602">
    <property type="entry name" value="GTP_CycHdrlase_I_dom"/>
</dbReference>
<dbReference type="NCBIfam" id="TIGR00063">
    <property type="entry name" value="folE"/>
    <property type="match status" value="1"/>
</dbReference>
<dbReference type="NCBIfam" id="NF006824">
    <property type="entry name" value="PRK09347.1-1"/>
    <property type="match status" value="1"/>
</dbReference>
<dbReference type="NCBIfam" id="NF006826">
    <property type="entry name" value="PRK09347.1-3"/>
    <property type="match status" value="1"/>
</dbReference>
<dbReference type="PANTHER" id="PTHR11109:SF7">
    <property type="entry name" value="GTP CYCLOHYDROLASE 1"/>
    <property type="match status" value="1"/>
</dbReference>
<dbReference type="PANTHER" id="PTHR11109">
    <property type="entry name" value="GTP CYCLOHYDROLASE I"/>
    <property type="match status" value="1"/>
</dbReference>
<dbReference type="Pfam" id="PF01227">
    <property type="entry name" value="GTP_cyclohydroI"/>
    <property type="match status" value="1"/>
</dbReference>
<dbReference type="SUPFAM" id="SSF55620">
    <property type="entry name" value="Tetrahydrobiopterin biosynthesis enzymes-like"/>
    <property type="match status" value="1"/>
</dbReference>
<dbReference type="PROSITE" id="PS00859">
    <property type="entry name" value="GTP_CYCLOHYDROL_1_1"/>
    <property type="match status" value="1"/>
</dbReference>
<dbReference type="PROSITE" id="PS00860">
    <property type="entry name" value="GTP_CYCLOHYDROL_1_2"/>
    <property type="match status" value="1"/>
</dbReference>
<proteinExistence type="inferred from homology"/>
<feature type="chain" id="PRO_1000100173" description="GTP cyclohydrolase 1">
    <location>
        <begin position="1"/>
        <end position="221"/>
    </location>
</feature>
<feature type="binding site" evidence="1">
    <location>
        <position position="111"/>
    </location>
    <ligand>
        <name>Zn(2+)</name>
        <dbReference type="ChEBI" id="CHEBI:29105"/>
    </ligand>
</feature>
<feature type="binding site" evidence="1">
    <location>
        <position position="114"/>
    </location>
    <ligand>
        <name>Zn(2+)</name>
        <dbReference type="ChEBI" id="CHEBI:29105"/>
    </ligand>
</feature>
<feature type="binding site" evidence="1">
    <location>
        <position position="182"/>
    </location>
    <ligand>
        <name>Zn(2+)</name>
        <dbReference type="ChEBI" id="CHEBI:29105"/>
    </ligand>
</feature>
<name>GCH1_ERWT9</name>
<accession>B2VII2</accession>
<evidence type="ECO:0000255" key="1">
    <source>
        <dbReference type="HAMAP-Rule" id="MF_00223"/>
    </source>
</evidence>
<organism>
    <name type="scientific">Erwinia tasmaniensis (strain DSM 17950 / CFBP 7177 / CIP 109463 / NCPPB 4357 / Et1/99)</name>
    <dbReference type="NCBI Taxonomy" id="465817"/>
    <lineage>
        <taxon>Bacteria</taxon>
        <taxon>Pseudomonadati</taxon>
        <taxon>Pseudomonadota</taxon>
        <taxon>Gammaproteobacteria</taxon>
        <taxon>Enterobacterales</taxon>
        <taxon>Erwiniaceae</taxon>
        <taxon>Erwinia</taxon>
    </lineage>
</organism>
<protein>
    <recommendedName>
        <fullName evidence="1">GTP cyclohydrolase 1</fullName>
        <ecNumber evidence="1">3.5.4.16</ecNumber>
    </recommendedName>
    <alternativeName>
        <fullName evidence="1">GTP cyclohydrolase I</fullName>
        <shortName evidence="1">GTP-CH-I</shortName>
    </alternativeName>
</protein>
<comment type="catalytic activity">
    <reaction evidence="1">
        <text>GTP + H2O = 7,8-dihydroneopterin 3'-triphosphate + formate + H(+)</text>
        <dbReference type="Rhea" id="RHEA:17473"/>
        <dbReference type="ChEBI" id="CHEBI:15377"/>
        <dbReference type="ChEBI" id="CHEBI:15378"/>
        <dbReference type="ChEBI" id="CHEBI:15740"/>
        <dbReference type="ChEBI" id="CHEBI:37565"/>
        <dbReference type="ChEBI" id="CHEBI:58462"/>
        <dbReference type="EC" id="3.5.4.16"/>
    </reaction>
</comment>
<comment type="pathway">
    <text evidence="1">Cofactor biosynthesis; 7,8-dihydroneopterin triphosphate biosynthesis; 7,8-dihydroneopterin triphosphate from GTP: step 1/1.</text>
</comment>
<comment type="subunit">
    <text evidence="1">Homomer.</text>
</comment>
<comment type="similarity">
    <text evidence="1">Belongs to the GTP cyclohydrolase I family.</text>
</comment>